<organismHost>
    <name type="scientific">Homo sapiens</name>
    <name type="common">Human</name>
    <dbReference type="NCBI Taxonomy" id="9606"/>
</organismHost>
<organism>
    <name type="scientific">Human immunodeficiency virus type 1 group M subtype F2 (isolate MP257)</name>
    <name type="common">HIV-1</name>
    <dbReference type="NCBI Taxonomy" id="388823"/>
    <lineage>
        <taxon>Viruses</taxon>
        <taxon>Riboviria</taxon>
        <taxon>Pararnavirae</taxon>
        <taxon>Artverviricota</taxon>
        <taxon>Revtraviricetes</taxon>
        <taxon>Ortervirales</taxon>
        <taxon>Retroviridae</taxon>
        <taxon>Orthoretrovirinae</taxon>
        <taxon>Lentivirus</taxon>
        <taxon>Human immunodeficiency virus type 1</taxon>
    </lineage>
</organism>
<comment type="function">
    <text evidence="1">Factor of infectivity and pathogenicity, required for optimal virus replication. Alters numerous pathways of T-lymphocyte function and down-regulates immunity surface molecules in order to evade host defense and increase viral infectivity. Alters the functionality of other immunity cells, like dendritic cells, monocytes/macrophages and NK cells.</text>
</comment>
<comment type="function">
    <text evidence="1">In infected CD4(+) T-lymphocytes, down-regulates the surface MHC-I, mature MHC-II, CD4, CD28, CCR5 and CXCR4 molecules. Mediates internalization and degradation of host CD4 through the interaction of with the cytoplasmic tail of CD4, the recruitment of AP-2 (clathrin adapter protein complex 2), internalization through clathrin coated pits, and subsequent transport to endosomes and lysosomes for degradation. Diverts host MHC-I molecules to the trans-Golgi network-associated endosomal compartments by an endocytic pathway to finally target them for degradation. MHC-I down-regulation may involve AP-1 (clathrin adapter protein complex 1) or possibly Src family kinase-ZAP70/Syk-PI3K cascade recruited by PACS2. In consequence infected cells are masked for immune recognition by cytotoxic T-lymphocytes. Decreasing the number of immune receptors also prevents reinfection by more HIV particles (superinfection). Down-regulates host SERINC3 and SERINC5 thereby excluding these proteins from the viral particles. Virion infectivity is drastically higher when SERINC3 or SERINC5 are excluded from the viral envelope, because these host antiviral proteins impair the membrane fusion event necessary for subsequent virion penetration.</text>
</comment>
<comment type="function">
    <text evidence="1">Bypasses host T-cell signaling by inducing a transcriptional program nearly identical to that of anti-CD3 cell activation. Interaction with TCR-zeta chain up-regulates the Fas ligand (FasL). Increasing surface FasL molecules and decreasing surface MHC-I molecules on infected CD4(+) cells send attacking cytotoxic CD8+ T-lymphocytes into apoptosis.</text>
</comment>
<comment type="function">
    <text evidence="1">Plays a role in optimizing the host cell environment for viral replication without causing cell death by apoptosis. Protects the infected cells from apoptosis in order to keep them alive until the next virus generation is ready to strike. Inhibits the Fas and TNFR-mediated death signals by blocking MAP3K5/ASK1. Decreases the half-life of TP53, protecting the infected cell against p53-mediated apoptosis. Inhibits the apoptotic signals regulated by the Bcl-2 family proteins through the formation of a Nef/PI3-kinase/PAK2 complex that leads to activation of PAK2 and induces phosphorylation of host BAD.</text>
</comment>
<comment type="function">
    <text evidence="1">Extracellular Nef protein targets CD4(+) T-lymphocytes for apoptosis by interacting with CXCR4 surface receptors.</text>
</comment>
<comment type="subunit">
    <text evidence="1">Monomer; cytosolic form. Homodimer; membrane bound form. Interacts with Nef associated p21-activated kinase (PAK2); this interaction activates PAK2. Associates with the Nef-MHC-I-AP1 complex; this complex is required for MHC-I internalization. Interacts (via C-terminus) with host PI3-kinase. Interacts with host PACS1; this interaction seems to be weak. Interacts with host PACS2. Interacts with host LCK and MAPK3; these interactions inhibit the kinase activity of the latter. Interacts with host ATP6V1H; this interaction may play a role in CD4 endocytosis. Associates with the CD4-Nef-AP2 complex; this complex is required for CD4 internalization. Interacts with host AP2 subunit alpha and AP2 subunit sigma2. Interacts with TCR-zeta chain; this interaction up-regulates the Fas ligand (FasL) surface expression. Interacts with host HCK, LYN, and SRC; these interactions activate the Src family kinases. Interacts with MAP3K5; this interaction inhibits the Fas and TNFR-mediated death signals. Interacts with beta-COP and PTE1. Interacts with human RACK1; this increases Nef phosphorylation by PKC. Interacts with TP53; this interaction decreases the half-life of TP53, protecting the infected cell against p53-mediated apoptosis.</text>
</comment>
<comment type="subcellular location">
    <subcellularLocation>
        <location evidence="1">Host cell membrane</location>
        <topology evidence="1">Lipid-anchor</topology>
        <orientation evidence="1">Cytoplasmic side</orientation>
    </subcellularLocation>
    <subcellularLocation>
        <location evidence="1">Virion</location>
    </subcellularLocation>
    <subcellularLocation>
        <location evidence="1">Secreted</location>
    </subcellularLocation>
    <subcellularLocation>
        <location evidence="1">Host Golgi apparatus membrane</location>
    </subcellularLocation>
    <text evidence="1">TGN localization requires PACS1. Associates with the inner plasma membrane through its N-terminal domain. Nef stimulates its own export via the release of exosomes. Incorporated in virions at a rate of about 10 molecules per virion, where it is cleaved.</text>
</comment>
<comment type="induction">
    <text evidence="1">Expressed early in the viral replication cycle.</text>
</comment>
<comment type="domain">
    <text evidence="1">The N-terminal domain is composed of the N-myristoyl glycine and of a cluster of positively charged amino acids. It is required for inner plasma membrane targeting of Nef and virion incorporation, and thereby for infectivity. This domain is also involved in binding to TP53.</text>
</comment>
<comment type="domain">
    <text evidence="1">The SH3-binding domain constituted of PxxP motifs mediates binding to several Src family proteins thereby regulating their tyrosine kinase activity. The same motifs also mediates the association with MAPK3, PI3-kinase and TCR-zeta.</text>
</comment>
<comment type="domain">
    <text evidence="1">The dileucine internalization motif and a diacidic motif seem to be required for binding to AP-2.</text>
</comment>
<comment type="domain">
    <text evidence="1">The acidic region binds to the sorting protein PACS-2, which targets Nef to the paranuclear region, enabling the PxxP motif to direct assembly of an SFK/ZAP-70/PI3K complex that accelerates endocytosis of cell-surface MHC-I.</text>
</comment>
<comment type="PTM">
    <text evidence="1">The virion-associated Nef proteins are cleaved by the viral protease to release the soluble C-terminal core protein. Nef is probably cleaved concomitantly with viral structural proteins on maturation of virus particles.</text>
</comment>
<comment type="PTM">
    <text evidence="1">Myristoylated.</text>
</comment>
<comment type="PTM">
    <text evidence="1">Phosphorylated on serine residues, probably by host PKCdelta and theta.</text>
</comment>
<comment type="miscellaneous">
    <text evidence="1">HIV-1 lineages are divided in three main groups, M (for Major), O (for Outlier), and N (for New, or Non-M, Non-O). The vast majority of strains found worldwide belong to the group M. Group O seems to be endemic to and largely confined to Cameroon and neighboring countries in West Central Africa, where these viruses represent a small minority of HIV-1 strains. The group N is represented by a limited number of isolates from Cameroonian persons. The group M is further subdivided in 9 clades or subtypes (A to D, F to H, J and K).</text>
</comment>
<comment type="similarity">
    <text evidence="1">Belongs to the lentivirus primate group Nef protein family.</text>
</comment>
<comment type="sequence caution">
    <conflict type="erroneous initiation">
        <sequence resource="EMBL-CDS" id="CAB58983"/>
    </conflict>
</comment>
<evidence type="ECO:0000255" key="1">
    <source>
        <dbReference type="HAMAP-Rule" id="MF_04078"/>
    </source>
</evidence>
<sequence length="200" mass="22866">MGGKWSKSSIVGWPAIRERIRAAEGVGAVSQDLDKRGAITNSNTGATNADLAWLEAQEEEVGFPVRPQVPLRPMTYKAALDLSHFLKEKGGLEGLIYSRKRQEILDLWVYHTQGYFPDWQNYTPGPGPRFPLTFGWCFKLVPVDPEEVEKANEGENNCLLHPMSLHGMEDDDKEVLKWQFDSRLALRHIARERHPEYYKD</sequence>
<protein>
    <recommendedName>
        <fullName evidence="1">Protein Nef</fullName>
    </recommendedName>
    <alternativeName>
        <fullName evidence="1">3'ORF</fullName>
    </alternativeName>
    <alternativeName>
        <fullName evidence="1">Negative factor</fullName>
        <shortName evidence="1">F-protein</shortName>
    </alternativeName>
    <component>
        <recommendedName>
            <fullName evidence="1">C-terminal core protein</fullName>
        </recommendedName>
    </component>
</protein>
<dbReference type="EMBL" id="AJ249237">
    <property type="protein sequence ID" value="CAB58983.1"/>
    <property type="status" value="ALT_INIT"/>
    <property type="molecule type" value="Genomic_RNA"/>
</dbReference>
<dbReference type="SMR" id="Q9QBY9"/>
<dbReference type="Proteomes" id="UP000121652">
    <property type="component" value="Segment"/>
</dbReference>
<dbReference type="GO" id="GO:0005576">
    <property type="term" value="C:extracellular region"/>
    <property type="evidence" value="ECO:0007669"/>
    <property type="project" value="UniProtKB-SubCell"/>
</dbReference>
<dbReference type="GO" id="GO:0044178">
    <property type="term" value="C:host cell Golgi membrane"/>
    <property type="evidence" value="ECO:0007669"/>
    <property type="project" value="UniProtKB-SubCell"/>
</dbReference>
<dbReference type="GO" id="GO:0020002">
    <property type="term" value="C:host cell plasma membrane"/>
    <property type="evidence" value="ECO:0007669"/>
    <property type="project" value="UniProtKB-SubCell"/>
</dbReference>
<dbReference type="GO" id="GO:0016020">
    <property type="term" value="C:membrane"/>
    <property type="evidence" value="ECO:0007669"/>
    <property type="project" value="UniProtKB-UniRule"/>
</dbReference>
<dbReference type="GO" id="GO:0044423">
    <property type="term" value="C:virion component"/>
    <property type="evidence" value="ECO:0007669"/>
    <property type="project" value="UniProtKB-UniRule"/>
</dbReference>
<dbReference type="GO" id="GO:0005525">
    <property type="term" value="F:GTP binding"/>
    <property type="evidence" value="ECO:0007669"/>
    <property type="project" value="UniProtKB-UniRule"/>
</dbReference>
<dbReference type="GO" id="GO:0017124">
    <property type="term" value="F:SH3 domain binding"/>
    <property type="evidence" value="ECO:0007669"/>
    <property type="project" value="UniProtKB-UniRule"/>
</dbReference>
<dbReference type="GO" id="GO:0046776">
    <property type="term" value="P:symbiont-mediated suppression of host antigen processing and presentation of peptide antigen via MHC class I"/>
    <property type="evidence" value="ECO:0007669"/>
    <property type="project" value="UniProtKB-UniRule"/>
</dbReference>
<dbReference type="GO" id="GO:0039505">
    <property type="term" value="P:symbiont-mediated suppression of host antigen processing and presentation of peptide antigen via MHC class II"/>
    <property type="evidence" value="ECO:0007669"/>
    <property type="project" value="UniProtKB-UniRule"/>
</dbReference>
<dbReference type="GO" id="GO:0140321">
    <property type="term" value="P:symbiont-mediated suppression of host autophagy"/>
    <property type="evidence" value="ECO:0007669"/>
    <property type="project" value="UniProtKB-KW"/>
</dbReference>
<dbReference type="Gene3D" id="4.10.890.10">
    <property type="entry name" value="HIV 1 nef anchor domain"/>
    <property type="match status" value="1"/>
</dbReference>
<dbReference type="Gene3D" id="3.30.62.10">
    <property type="entry name" value="Nef Regulatory Factor"/>
    <property type="match status" value="1"/>
</dbReference>
<dbReference type="HAMAP" id="MF_04078">
    <property type="entry name" value="NEF_HIV"/>
    <property type="match status" value="1"/>
</dbReference>
<dbReference type="InterPro" id="IPR027480">
    <property type="entry name" value="HIV-1_Nef_anchor_sf"/>
</dbReference>
<dbReference type="InterPro" id="IPR027481">
    <property type="entry name" value="HIV-1_Nef_core_sf"/>
</dbReference>
<dbReference type="InterPro" id="IPR001558">
    <property type="entry name" value="HIV_Nef"/>
</dbReference>
<dbReference type="Pfam" id="PF00469">
    <property type="entry name" value="F-protein"/>
    <property type="match status" value="1"/>
</dbReference>
<dbReference type="SUPFAM" id="SSF55671">
    <property type="entry name" value="Regulatory factor Nef"/>
    <property type="match status" value="1"/>
</dbReference>
<reference key="1">
    <citation type="journal article" date="2000" name="AIDS Res. Hum. Retroviruses">
        <title>Near-full-length genome sequencing of divergent African HIV type 1 subtype F viruses leads to the identification of a new HIV type 1 subtype designated K.</title>
        <authorList>
            <person name="Triques K."/>
            <person name="Bourgeois A."/>
            <person name="Vidale N."/>
            <person name="Mpoudi-Ngole E."/>
            <person name="Mulanga-Kabeya C."/>
            <person name="Nzilambi N."/>
            <person name="Torimiro N."/>
            <person name="Saman E."/>
            <person name="Delaporte E."/>
            <person name="Peeters M."/>
        </authorList>
    </citation>
    <scope>NUCLEOTIDE SEQUENCE [GENOMIC RNA]</scope>
</reference>
<name>NEF_HV1M2</name>
<accession>Q9QBY9</accession>
<keyword id="KW-0014">AIDS</keyword>
<keyword id="KW-0053">Apoptosis</keyword>
<keyword id="KW-0244">Early protein</keyword>
<keyword id="KW-1032">Host cell membrane</keyword>
<keyword id="KW-1040">Host Golgi apparatus</keyword>
<keyword id="KW-1043">Host membrane</keyword>
<keyword id="KW-0945">Host-virus interaction</keyword>
<keyword id="KW-1080">Inhibition of host adaptive immune response by virus</keyword>
<keyword id="KW-1083">Inhibition of host autophagy by virus</keyword>
<keyword id="KW-1115">Inhibition of host MHC class I molecule presentation by virus</keyword>
<keyword id="KW-1116">Inhibition of host MHC class II molecule presentation by virus</keyword>
<keyword id="KW-0449">Lipoprotein</keyword>
<keyword id="KW-0472">Membrane</keyword>
<keyword id="KW-0519">Myristate</keyword>
<keyword id="KW-0597">Phosphoprotein</keyword>
<keyword id="KW-0964">Secreted</keyword>
<keyword id="KW-0729">SH3-binding</keyword>
<keyword id="KW-0899">Viral immunoevasion</keyword>
<keyword id="KW-0946">Virion</keyword>
<keyword id="KW-0843">Virulence</keyword>
<proteinExistence type="inferred from homology"/>
<feature type="initiator methionine" description="Removed; by host" evidence="1">
    <location>
        <position position="1"/>
    </location>
</feature>
<feature type="chain" id="PRO_0000244800" description="Protein Nef" evidence="1">
    <location>
        <begin position="2"/>
        <end position="200"/>
    </location>
</feature>
<feature type="chain" id="PRO_0000244801" description="C-terminal core protein" evidence="1">
    <location>
        <begin position="54"/>
        <end position="200"/>
    </location>
</feature>
<feature type="region of interest" description="Acidic; interacts with host PACS1 and PACS2; stabilizes the interaction of NEF/MHC-I with host AP1M1; necessary for MHC-I internalization" evidence="1">
    <location>
        <begin position="58"/>
        <end position="60"/>
    </location>
</feature>
<feature type="region of interest" description="SH3-binding; interaction with Src family tyrosine kinases" evidence="1">
    <location>
        <begin position="64"/>
        <end position="73"/>
    </location>
</feature>
<feature type="region of interest" description="Mediates dimerization, Nef-PTE1 interaction" evidence="1">
    <location>
        <begin position="103"/>
        <end position="119"/>
    </location>
</feature>
<feature type="region of interest" description="Binding to ATP6V1H" evidence="1">
    <location>
        <begin position="143"/>
        <end position="175"/>
    </location>
</feature>
<feature type="short sequence motif" description="PxxP; stabilizes the interaction of NEF/MHC-I with host AP1M1; necessary for MHC-I internalization" evidence="1">
    <location>
        <begin position="67"/>
        <end position="70"/>
    </location>
</feature>
<feature type="short sequence motif" description="Dileucine internalization motif; necessary for CD4 internalization" evidence="1">
    <location>
        <begin position="159"/>
        <end position="160"/>
    </location>
</feature>
<feature type="short sequence motif" description="Diacidic; necessary for CD4 internalization" evidence="1">
    <location>
        <begin position="169"/>
        <end position="170"/>
    </location>
</feature>
<feature type="site" description="Cleavage; by viral protease" evidence="1">
    <location>
        <begin position="53"/>
        <end position="54"/>
    </location>
</feature>
<feature type="modified residue" description="Phosphoserine; by host" evidence="1">
    <location>
        <position position="6"/>
    </location>
</feature>
<feature type="lipid moiety-binding region" description="N-myristoyl glycine; by host" evidence="1">
    <location>
        <position position="2"/>
    </location>
</feature>
<gene>
    <name evidence="1" type="primary">nef</name>
</gene>